<sequence length="144" mass="14990">MAKKIIGYIKLQIPAGKANPSPPVGPALGQRGLNIMEFCKAFNAATQGMESGLPIPVVITAFADKSFTFVMKTPPASILLKKAAGLQKGSSNPLTNKVGKLTRAQLEEIAKTKEPDLTAADLDAAVRTIAGSARSMGLDVEGVV</sequence>
<organism>
    <name type="scientific">Neisseria gonorrhoeae (strain ATCC 700825 / FA 1090)</name>
    <dbReference type="NCBI Taxonomy" id="242231"/>
    <lineage>
        <taxon>Bacteria</taxon>
        <taxon>Pseudomonadati</taxon>
        <taxon>Pseudomonadota</taxon>
        <taxon>Betaproteobacteria</taxon>
        <taxon>Neisseriales</taxon>
        <taxon>Neisseriaceae</taxon>
        <taxon>Neisseria</taxon>
    </lineage>
</organism>
<evidence type="ECO:0000255" key="1">
    <source>
        <dbReference type="HAMAP-Rule" id="MF_00736"/>
    </source>
</evidence>
<evidence type="ECO:0000305" key="2"/>
<reference key="1">
    <citation type="submission" date="2003-03" db="EMBL/GenBank/DDBJ databases">
        <title>The complete genome sequence of Neisseria gonorrhoeae.</title>
        <authorList>
            <person name="Lewis L.A."/>
            <person name="Gillaspy A.F."/>
            <person name="McLaughlin R.E."/>
            <person name="Gipson M."/>
            <person name="Ducey T.F."/>
            <person name="Ownbey T."/>
            <person name="Hartman K."/>
            <person name="Nydick C."/>
            <person name="Carson M.B."/>
            <person name="Vaughn J."/>
            <person name="Thomson C."/>
            <person name="Song L."/>
            <person name="Lin S."/>
            <person name="Yuan X."/>
            <person name="Najar F."/>
            <person name="Zhan M."/>
            <person name="Ren Q."/>
            <person name="Zhu H."/>
            <person name="Qi S."/>
            <person name="Kenton S.M."/>
            <person name="Lai H."/>
            <person name="White J.D."/>
            <person name="Clifton S."/>
            <person name="Roe B.A."/>
            <person name="Dyer D.W."/>
        </authorList>
    </citation>
    <scope>NUCLEOTIDE SEQUENCE [LARGE SCALE GENOMIC DNA]</scope>
    <source>
        <strain>ATCC 700825 / FA 1090</strain>
    </source>
</reference>
<name>RL11_NEIG1</name>
<dbReference type="EMBL" id="AE004969">
    <property type="protein sequence ID" value="AAW90476.1"/>
    <property type="molecule type" value="Genomic_DNA"/>
</dbReference>
<dbReference type="RefSeq" id="WP_003690112.1">
    <property type="nucleotide sequence ID" value="NC_002946.2"/>
</dbReference>
<dbReference type="RefSeq" id="YP_208888.1">
    <property type="nucleotide sequence ID" value="NC_002946.2"/>
</dbReference>
<dbReference type="SMR" id="Q5F5R1"/>
<dbReference type="STRING" id="242231.NGO_1855"/>
<dbReference type="GeneID" id="66754276"/>
<dbReference type="KEGG" id="ngo:NGO_1855"/>
<dbReference type="PATRIC" id="fig|242231.10.peg.2230"/>
<dbReference type="HOGENOM" id="CLU_074237_2_0_4"/>
<dbReference type="Proteomes" id="UP000000535">
    <property type="component" value="Chromosome"/>
</dbReference>
<dbReference type="GO" id="GO:0022625">
    <property type="term" value="C:cytosolic large ribosomal subunit"/>
    <property type="evidence" value="ECO:0007669"/>
    <property type="project" value="TreeGrafter"/>
</dbReference>
<dbReference type="GO" id="GO:0070180">
    <property type="term" value="F:large ribosomal subunit rRNA binding"/>
    <property type="evidence" value="ECO:0007669"/>
    <property type="project" value="UniProtKB-UniRule"/>
</dbReference>
<dbReference type="GO" id="GO:0003735">
    <property type="term" value="F:structural constituent of ribosome"/>
    <property type="evidence" value="ECO:0007669"/>
    <property type="project" value="InterPro"/>
</dbReference>
<dbReference type="GO" id="GO:0006412">
    <property type="term" value="P:translation"/>
    <property type="evidence" value="ECO:0007669"/>
    <property type="project" value="UniProtKB-UniRule"/>
</dbReference>
<dbReference type="CDD" id="cd00349">
    <property type="entry name" value="Ribosomal_L11"/>
    <property type="match status" value="1"/>
</dbReference>
<dbReference type="FunFam" id="1.10.10.250:FF:000001">
    <property type="entry name" value="50S ribosomal protein L11"/>
    <property type="match status" value="1"/>
</dbReference>
<dbReference type="FunFam" id="3.30.1550.10:FF:000001">
    <property type="entry name" value="50S ribosomal protein L11"/>
    <property type="match status" value="1"/>
</dbReference>
<dbReference type="Gene3D" id="1.10.10.250">
    <property type="entry name" value="Ribosomal protein L11, C-terminal domain"/>
    <property type="match status" value="1"/>
</dbReference>
<dbReference type="Gene3D" id="3.30.1550.10">
    <property type="entry name" value="Ribosomal protein L11/L12, N-terminal domain"/>
    <property type="match status" value="1"/>
</dbReference>
<dbReference type="HAMAP" id="MF_00736">
    <property type="entry name" value="Ribosomal_uL11"/>
    <property type="match status" value="1"/>
</dbReference>
<dbReference type="InterPro" id="IPR000911">
    <property type="entry name" value="Ribosomal_uL11"/>
</dbReference>
<dbReference type="InterPro" id="IPR006519">
    <property type="entry name" value="Ribosomal_uL11_bac-typ"/>
</dbReference>
<dbReference type="InterPro" id="IPR020783">
    <property type="entry name" value="Ribosomal_uL11_C"/>
</dbReference>
<dbReference type="InterPro" id="IPR036769">
    <property type="entry name" value="Ribosomal_uL11_C_sf"/>
</dbReference>
<dbReference type="InterPro" id="IPR020785">
    <property type="entry name" value="Ribosomal_uL11_CS"/>
</dbReference>
<dbReference type="InterPro" id="IPR020784">
    <property type="entry name" value="Ribosomal_uL11_N"/>
</dbReference>
<dbReference type="InterPro" id="IPR036796">
    <property type="entry name" value="Ribosomal_uL11_N_sf"/>
</dbReference>
<dbReference type="NCBIfam" id="TIGR01632">
    <property type="entry name" value="L11_bact"/>
    <property type="match status" value="1"/>
</dbReference>
<dbReference type="PANTHER" id="PTHR11661">
    <property type="entry name" value="60S RIBOSOMAL PROTEIN L12"/>
    <property type="match status" value="1"/>
</dbReference>
<dbReference type="PANTHER" id="PTHR11661:SF1">
    <property type="entry name" value="LARGE RIBOSOMAL SUBUNIT PROTEIN UL11M"/>
    <property type="match status" value="1"/>
</dbReference>
<dbReference type="Pfam" id="PF00298">
    <property type="entry name" value="Ribosomal_L11"/>
    <property type="match status" value="1"/>
</dbReference>
<dbReference type="Pfam" id="PF03946">
    <property type="entry name" value="Ribosomal_L11_N"/>
    <property type="match status" value="1"/>
</dbReference>
<dbReference type="SMART" id="SM00649">
    <property type="entry name" value="RL11"/>
    <property type="match status" value="1"/>
</dbReference>
<dbReference type="SUPFAM" id="SSF54747">
    <property type="entry name" value="Ribosomal L11/L12e N-terminal domain"/>
    <property type="match status" value="1"/>
</dbReference>
<dbReference type="SUPFAM" id="SSF46906">
    <property type="entry name" value="Ribosomal protein L11, C-terminal domain"/>
    <property type="match status" value="1"/>
</dbReference>
<dbReference type="PROSITE" id="PS00359">
    <property type="entry name" value="RIBOSOMAL_L11"/>
    <property type="match status" value="1"/>
</dbReference>
<comment type="function">
    <text evidence="1">Forms part of the ribosomal stalk which helps the ribosome interact with GTP-bound translation factors.</text>
</comment>
<comment type="subunit">
    <text evidence="1">Part of the ribosomal stalk of the 50S ribosomal subunit. Interacts with L10 and the large rRNA to form the base of the stalk. L10 forms an elongated spine to which L12 dimers bind in a sequential fashion forming a multimeric L10(L12)X complex.</text>
</comment>
<comment type="PTM">
    <text evidence="1">One or more lysine residues are methylated.</text>
</comment>
<comment type="similarity">
    <text evidence="1">Belongs to the universal ribosomal protein uL11 family.</text>
</comment>
<proteinExistence type="inferred from homology"/>
<feature type="chain" id="PRO_0000258174" description="Large ribosomal subunit protein uL11">
    <location>
        <begin position="1"/>
        <end position="144"/>
    </location>
</feature>
<accession>Q5F5R1</accession>
<gene>
    <name evidence="1" type="primary">rplK</name>
    <name type="ordered locus">NGO_1855</name>
</gene>
<protein>
    <recommendedName>
        <fullName evidence="1">Large ribosomal subunit protein uL11</fullName>
    </recommendedName>
    <alternativeName>
        <fullName evidence="2">50S ribosomal protein L11</fullName>
    </alternativeName>
</protein>
<keyword id="KW-0488">Methylation</keyword>
<keyword id="KW-1185">Reference proteome</keyword>
<keyword id="KW-0687">Ribonucleoprotein</keyword>
<keyword id="KW-0689">Ribosomal protein</keyword>
<keyword id="KW-0694">RNA-binding</keyword>
<keyword id="KW-0699">rRNA-binding</keyword>